<evidence type="ECO:0000256" key="1">
    <source>
        <dbReference type="SAM" id="MobiDB-lite"/>
    </source>
</evidence>
<evidence type="ECO:0000269" key="2">
    <source>
    </source>
</evidence>
<organism>
    <name type="scientific">Schizosaccharomyces pombe (strain 972 / ATCC 24843)</name>
    <name type="common">Fission yeast</name>
    <dbReference type="NCBI Taxonomy" id="284812"/>
    <lineage>
        <taxon>Eukaryota</taxon>
        <taxon>Fungi</taxon>
        <taxon>Dikarya</taxon>
        <taxon>Ascomycota</taxon>
        <taxon>Taphrinomycotina</taxon>
        <taxon>Schizosaccharomycetes</taxon>
        <taxon>Schizosaccharomycetales</taxon>
        <taxon>Schizosaccharomycetaceae</taxon>
        <taxon>Schizosaccharomyces</taxon>
    </lineage>
</organism>
<keyword id="KW-0963">Cytoplasm</keyword>
<keyword id="KW-0539">Nucleus</keyword>
<keyword id="KW-1185">Reference proteome</keyword>
<proteinExistence type="predicted"/>
<feature type="chain" id="PRO_0000304114" description="Uncharacterized protein C191.01">
    <location>
        <begin position="1"/>
        <end position="178"/>
    </location>
</feature>
<feature type="region of interest" description="Disordered" evidence="1">
    <location>
        <begin position="89"/>
        <end position="115"/>
    </location>
</feature>
<feature type="region of interest" description="Disordered" evidence="1">
    <location>
        <begin position="136"/>
        <end position="178"/>
    </location>
</feature>
<feature type="compositionally biased region" description="Low complexity" evidence="1">
    <location>
        <begin position="98"/>
        <end position="109"/>
    </location>
</feature>
<feature type="compositionally biased region" description="Acidic residues" evidence="1">
    <location>
        <begin position="167"/>
        <end position="178"/>
    </location>
</feature>
<reference key="1">
    <citation type="journal article" date="2002" name="Nature">
        <title>The genome sequence of Schizosaccharomyces pombe.</title>
        <authorList>
            <person name="Wood V."/>
            <person name="Gwilliam R."/>
            <person name="Rajandream M.A."/>
            <person name="Lyne M.H."/>
            <person name="Lyne R."/>
            <person name="Stewart A."/>
            <person name="Sgouros J.G."/>
            <person name="Peat N."/>
            <person name="Hayles J."/>
            <person name="Baker S.G."/>
            <person name="Basham D."/>
            <person name="Bowman S."/>
            <person name="Brooks K."/>
            <person name="Brown D."/>
            <person name="Brown S."/>
            <person name="Chillingworth T."/>
            <person name="Churcher C.M."/>
            <person name="Collins M."/>
            <person name="Connor R."/>
            <person name="Cronin A."/>
            <person name="Davis P."/>
            <person name="Feltwell T."/>
            <person name="Fraser A."/>
            <person name="Gentles S."/>
            <person name="Goble A."/>
            <person name="Hamlin N."/>
            <person name="Harris D.E."/>
            <person name="Hidalgo J."/>
            <person name="Hodgson G."/>
            <person name="Holroyd S."/>
            <person name="Hornsby T."/>
            <person name="Howarth S."/>
            <person name="Huckle E.J."/>
            <person name="Hunt S."/>
            <person name="Jagels K."/>
            <person name="James K.D."/>
            <person name="Jones L."/>
            <person name="Jones M."/>
            <person name="Leather S."/>
            <person name="McDonald S."/>
            <person name="McLean J."/>
            <person name="Mooney P."/>
            <person name="Moule S."/>
            <person name="Mungall K.L."/>
            <person name="Murphy L.D."/>
            <person name="Niblett D."/>
            <person name="Odell C."/>
            <person name="Oliver K."/>
            <person name="O'Neil S."/>
            <person name="Pearson D."/>
            <person name="Quail M.A."/>
            <person name="Rabbinowitsch E."/>
            <person name="Rutherford K.M."/>
            <person name="Rutter S."/>
            <person name="Saunders D."/>
            <person name="Seeger K."/>
            <person name="Sharp S."/>
            <person name="Skelton J."/>
            <person name="Simmonds M.N."/>
            <person name="Squares R."/>
            <person name="Squares S."/>
            <person name="Stevens K."/>
            <person name="Taylor K."/>
            <person name="Taylor R.G."/>
            <person name="Tivey A."/>
            <person name="Walsh S.V."/>
            <person name="Warren T."/>
            <person name="Whitehead S."/>
            <person name="Woodward J.R."/>
            <person name="Volckaert G."/>
            <person name="Aert R."/>
            <person name="Robben J."/>
            <person name="Grymonprez B."/>
            <person name="Weltjens I."/>
            <person name="Vanstreels E."/>
            <person name="Rieger M."/>
            <person name="Schaefer M."/>
            <person name="Mueller-Auer S."/>
            <person name="Gabel C."/>
            <person name="Fuchs M."/>
            <person name="Duesterhoeft A."/>
            <person name="Fritzc C."/>
            <person name="Holzer E."/>
            <person name="Moestl D."/>
            <person name="Hilbert H."/>
            <person name="Borzym K."/>
            <person name="Langer I."/>
            <person name="Beck A."/>
            <person name="Lehrach H."/>
            <person name="Reinhardt R."/>
            <person name="Pohl T.M."/>
            <person name="Eger P."/>
            <person name="Zimmermann W."/>
            <person name="Wedler H."/>
            <person name="Wambutt R."/>
            <person name="Purnelle B."/>
            <person name="Goffeau A."/>
            <person name="Cadieu E."/>
            <person name="Dreano S."/>
            <person name="Gloux S."/>
            <person name="Lelaure V."/>
            <person name="Mottier S."/>
            <person name="Galibert F."/>
            <person name="Aves S.J."/>
            <person name="Xiang Z."/>
            <person name="Hunt C."/>
            <person name="Moore K."/>
            <person name="Hurst S.M."/>
            <person name="Lucas M."/>
            <person name="Rochet M."/>
            <person name="Gaillardin C."/>
            <person name="Tallada V.A."/>
            <person name="Garzon A."/>
            <person name="Thode G."/>
            <person name="Daga R.R."/>
            <person name="Cruzado L."/>
            <person name="Jimenez J."/>
            <person name="Sanchez M."/>
            <person name="del Rey F."/>
            <person name="Benito J."/>
            <person name="Dominguez A."/>
            <person name="Revuelta J.L."/>
            <person name="Moreno S."/>
            <person name="Armstrong J."/>
            <person name="Forsburg S.L."/>
            <person name="Cerutti L."/>
            <person name="Lowe T."/>
            <person name="McCombie W.R."/>
            <person name="Paulsen I."/>
            <person name="Potashkin J."/>
            <person name="Shpakovski G.V."/>
            <person name="Ussery D."/>
            <person name="Barrell B.G."/>
            <person name="Nurse P."/>
        </authorList>
    </citation>
    <scope>NUCLEOTIDE SEQUENCE [LARGE SCALE GENOMIC DNA]</scope>
    <source>
        <strain>972 / ATCC 24843</strain>
    </source>
</reference>
<reference key="2">
    <citation type="journal article" date="2006" name="Nat. Biotechnol.">
        <title>ORFeome cloning and global analysis of protein localization in the fission yeast Schizosaccharomyces pombe.</title>
        <authorList>
            <person name="Matsuyama A."/>
            <person name="Arai R."/>
            <person name="Yashiroda Y."/>
            <person name="Shirai A."/>
            <person name="Kamata A."/>
            <person name="Sekido S."/>
            <person name="Kobayashi Y."/>
            <person name="Hashimoto A."/>
            <person name="Hamamoto M."/>
            <person name="Hiraoka Y."/>
            <person name="Horinouchi S."/>
            <person name="Yoshida M."/>
        </authorList>
    </citation>
    <scope>SUBCELLULAR LOCATION [LARGE SCALE ANALYSIS]</scope>
</reference>
<accession>O94733</accession>
<name>YQ61_SCHPO</name>
<protein>
    <recommendedName>
        <fullName>Uncharacterized protein C191.01</fullName>
    </recommendedName>
</protein>
<gene>
    <name type="ORF">SPCC191.01</name>
    <name type="ORF">SPCC417.13</name>
</gene>
<comment type="subcellular location">
    <subcellularLocation>
        <location evidence="2">Cytoplasm</location>
    </subcellularLocation>
    <subcellularLocation>
        <location evidence="2">Nucleus</location>
    </subcellularLocation>
</comment>
<dbReference type="EMBL" id="CU329672">
    <property type="protein sequence ID" value="CAA22659.1"/>
    <property type="molecule type" value="Genomic_DNA"/>
</dbReference>
<dbReference type="PIR" id="T41214">
    <property type="entry name" value="T41214"/>
</dbReference>
<dbReference type="RefSeq" id="NP_588290.1">
    <property type="nucleotide sequence ID" value="NM_001023280.2"/>
</dbReference>
<dbReference type="SMR" id="O94733"/>
<dbReference type="BioGRID" id="275969">
    <property type="interactions" value="2"/>
</dbReference>
<dbReference type="FunCoup" id="O94733">
    <property type="interactions" value="1"/>
</dbReference>
<dbReference type="IntAct" id="O94733">
    <property type="interactions" value="1"/>
</dbReference>
<dbReference type="STRING" id="284812.O94733"/>
<dbReference type="iPTMnet" id="O94733"/>
<dbReference type="PaxDb" id="4896-SPCC191.01.1"/>
<dbReference type="EnsemblFungi" id="SPCC191.01.1">
    <property type="protein sequence ID" value="SPCC191.01.1:pep"/>
    <property type="gene ID" value="SPCC191.01"/>
</dbReference>
<dbReference type="KEGG" id="spo:2539404"/>
<dbReference type="PomBase" id="SPCC191.01"/>
<dbReference type="VEuPathDB" id="FungiDB:SPCC191.01"/>
<dbReference type="HOGENOM" id="CLU_1611742_0_0_1"/>
<dbReference type="InParanoid" id="O94733"/>
<dbReference type="OMA" id="HLWRQFC"/>
<dbReference type="PRO" id="PR:O94733"/>
<dbReference type="Proteomes" id="UP000002485">
    <property type="component" value="Chromosome III"/>
</dbReference>
<dbReference type="GO" id="GO:0005829">
    <property type="term" value="C:cytosol"/>
    <property type="evidence" value="ECO:0007005"/>
    <property type="project" value="PomBase"/>
</dbReference>
<dbReference type="GO" id="GO:0005634">
    <property type="term" value="C:nucleus"/>
    <property type="evidence" value="ECO:0007005"/>
    <property type="project" value="PomBase"/>
</dbReference>
<sequence length="178" mass="20179">MVTRRLSTNVHIDLQPIRQGILLPFHDRPAEMRDLAKCNDQFFRNVRDTISEPKFTQLMELWLEKSRAEVPDADFLMTTRNIMLSFPSNEEQGHQRSASHGSTSSATSTPKRLSISSMDPARIHLWRQFCNVVGYDMPTPGEQKEAPPSPAQEAIPESPVEEAIASDSDEEEEEEIKA</sequence>